<sequence>MSLEFGFILINIFTAIVSFSTLSHALLHPSSVSHNVSRSRYYMTTNELWFNQTLDHESPNDHRKFRQRYYEFMDYFRSPDGPMFMIICGEGPCSGIANDYINVLAKKFQAGVVSLEHRYYGKSSPFNSLATENLKYLSSKQALYDLASFRQYYQESLNKKLNISSGGSDNPWFFFGISYSGALSAWFRLKFPHLTCGSLASSAVVRAIYEFSEFDQQIGESAGQECKLALQETNKLLELGLKVKNKAVKSLFNATELDVDADFLYLTADAAVMAFQYGNPDKLCVPLVEAKKNGSDLVVTYSTYVREYCMRIWGLRVRTYNRKHLRNTVVTADSAYRLWWFQACTELGYFQVAPKYDSVRSHQINTTFHLDLCKSLFGKDVYPKVDATNLYYGGDRLAATKIIFTNGSEDPWRHASKQNSTHEMPSYIIKCRNCGHGSDIRGCPQSPMVIEGKSNNCSLPDYVNKVRQQMVEHIDLWLSECRQSIRSSI</sequence>
<reference key="1">
    <citation type="journal article" date="1999" name="Nature">
        <title>Sequence and analysis of chromosome 2 of the plant Arabidopsis thaliana.</title>
        <authorList>
            <person name="Lin X."/>
            <person name="Kaul S."/>
            <person name="Rounsley S.D."/>
            <person name="Shea T.P."/>
            <person name="Benito M.-I."/>
            <person name="Town C.D."/>
            <person name="Fujii C.Y."/>
            <person name="Mason T.M."/>
            <person name="Bowman C.L."/>
            <person name="Barnstead M.E."/>
            <person name="Feldblyum T.V."/>
            <person name="Buell C.R."/>
            <person name="Ketchum K.A."/>
            <person name="Lee J.J."/>
            <person name="Ronning C.M."/>
            <person name="Koo H.L."/>
            <person name="Moffat K.S."/>
            <person name="Cronin L.A."/>
            <person name="Shen M."/>
            <person name="Pai G."/>
            <person name="Van Aken S."/>
            <person name="Umayam L."/>
            <person name="Tallon L.J."/>
            <person name="Gill J.E."/>
            <person name="Adams M.D."/>
            <person name="Carrera A.J."/>
            <person name="Creasy T.H."/>
            <person name="Goodman H.M."/>
            <person name="Somerville C.R."/>
            <person name="Copenhaver G.P."/>
            <person name="Preuss D."/>
            <person name="Nierman W.C."/>
            <person name="White O."/>
            <person name="Eisen J.A."/>
            <person name="Salzberg S.L."/>
            <person name="Fraser C.M."/>
            <person name="Venter J.C."/>
        </authorList>
    </citation>
    <scope>NUCLEOTIDE SEQUENCE [LARGE SCALE GENOMIC DNA]</scope>
    <source>
        <strain>cv. Columbia</strain>
    </source>
</reference>
<reference key="2">
    <citation type="journal article" date="2017" name="Plant J.">
        <title>Araport11: a complete reannotation of the Arabidopsis thaliana reference genome.</title>
        <authorList>
            <person name="Cheng C.Y."/>
            <person name="Krishnakumar V."/>
            <person name="Chan A.P."/>
            <person name="Thibaud-Nissen F."/>
            <person name="Schobel S."/>
            <person name="Town C.D."/>
        </authorList>
    </citation>
    <scope>GENOME REANNOTATION</scope>
    <source>
        <strain>cv. Columbia</strain>
    </source>
</reference>
<reference key="3">
    <citation type="journal article" date="2006" name="Plant Biotechnol. J.">
        <title>Simultaneous high-throughput recombinational cloning of open reading frames in closed and open configurations.</title>
        <authorList>
            <person name="Underwood B.A."/>
            <person name="Vanderhaeghen R."/>
            <person name="Whitford R."/>
            <person name="Town C.D."/>
            <person name="Hilson P."/>
        </authorList>
    </citation>
    <scope>NUCLEOTIDE SEQUENCE [LARGE SCALE MRNA] OF 73-489</scope>
    <source>
        <strain>cv. Columbia</strain>
    </source>
</reference>
<reference key="4">
    <citation type="journal article" date="2004" name="Plant Physiol.">
        <title>AraPerox. A database of putative Arabidopsis proteins from plant peroxisomes.</title>
        <authorList>
            <person name="Reumann S."/>
            <person name="Ma C."/>
            <person name="Lemke S."/>
            <person name="Babujee L."/>
        </authorList>
    </citation>
    <scope>PREDICTION</scope>
</reference>
<reference key="5">
    <citation type="journal article" date="2005" name="Development">
        <title>Genetic and molecular identification of genes required for female gametophyte development and function in Arabidopsis.</title>
        <authorList>
            <person name="Pagnussat G.C."/>
            <person name="Yu H.-J."/>
            <person name="Ngo Q.A."/>
            <person name="Rajani S."/>
            <person name="Mayalagu S."/>
            <person name="Johnson C.S."/>
            <person name="Capron A."/>
            <person name="Xie L.-F."/>
            <person name="Ye D."/>
            <person name="Sundaresan V."/>
        </authorList>
    </citation>
    <scope>FUNCTION</scope>
</reference>
<reference key="6">
    <citation type="journal article" date="2009" name="Plant Physiol.">
        <title>Arabidopsis LON2 is necessary for peroxisomal function and sustained matrix protein import.</title>
        <authorList>
            <person name="Lingard M.J."/>
            <person name="Bartel B."/>
        </authorList>
    </citation>
    <scope>DISRUPTION PHENOTYPE</scope>
</reference>
<proteinExistence type="evidence at transcript level"/>
<comment type="function">
    <text evidence="3">May be involved in a proteolytic pathway controlling the nuclear division phase of megagametogenesis.</text>
</comment>
<comment type="subcellular location">
    <subcellularLocation>
        <location evidence="5">Secreted</location>
    </subcellularLocation>
    <text evidence="2">Prediction of a peroxisomal location.</text>
</comment>
<comment type="disruption phenotype">
    <text evidence="4">No visible phenotype.</text>
</comment>
<comment type="similarity">
    <text evidence="5">Belongs to the peptidase S28 family.</text>
</comment>
<comment type="sequence caution" evidence="5">
    <conflict type="erroneous gene model prediction">
        <sequence resource="EMBL-CDS" id="AAD20118"/>
    </conflict>
</comment>
<protein>
    <recommendedName>
        <fullName>Probable serine protease EDA2</fullName>
        <ecNumber>3.4.-.-</ecNumber>
    </recommendedName>
    <alternativeName>
        <fullName>Protein EMBRYO SAC DEVELOPMENT ARREST 2</fullName>
    </alternativeName>
</protein>
<dbReference type="EC" id="3.4.-.-"/>
<dbReference type="EMBL" id="AC006201">
    <property type="protein sequence ID" value="AAD20118.1"/>
    <property type="status" value="ALT_SEQ"/>
    <property type="molecule type" value="Genomic_DNA"/>
</dbReference>
<dbReference type="EMBL" id="CP002685">
    <property type="protein sequence ID" value="AEC06724.1"/>
    <property type="molecule type" value="Genomic_DNA"/>
</dbReference>
<dbReference type="EMBL" id="DQ446516">
    <property type="protein sequence ID" value="ABE65823.1"/>
    <property type="molecule type" value="mRNA"/>
</dbReference>
<dbReference type="PIR" id="A84560">
    <property type="entry name" value="A84560"/>
</dbReference>
<dbReference type="RefSeq" id="NP_179399.5">
    <property type="nucleotide sequence ID" value="NM_127364.6"/>
</dbReference>
<dbReference type="SMR" id="Q1PF50"/>
<dbReference type="FunCoup" id="Q1PF50">
    <property type="interactions" value="165"/>
</dbReference>
<dbReference type="STRING" id="3702.Q1PF50"/>
<dbReference type="MEROPS" id="S28.A05"/>
<dbReference type="GlyCosmos" id="Q1PF50">
    <property type="glycosylation" value="9 sites, No reported glycans"/>
</dbReference>
<dbReference type="GlyGen" id="Q1PF50">
    <property type="glycosylation" value="9 sites"/>
</dbReference>
<dbReference type="iPTMnet" id="Q1PF50"/>
<dbReference type="PaxDb" id="3702-AT2G18080.1"/>
<dbReference type="ProteomicsDB" id="222058"/>
<dbReference type="EnsemblPlants" id="AT2G18080.1">
    <property type="protein sequence ID" value="AT2G18080.1"/>
    <property type="gene ID" value="AT2G18080"/>
</dbReference>
<dbReference type="GeneID" id="816320"/>
<dbReference type="Gramene" id="AT2G18080.1">
    <property type="protein sequence ID" value="AT2G18080.1"/>
    <property type="gene ID" value="AT2G18080"/>
</dbReference>
<dbReference type="KEGG" id="ath:AT2G18080"/>
<dbReference type="Araport" id="AT2G18080"/>
<dbReference type="TAIR" id="AT2G18080">
    <property type="gene designation" value="EDA2"/>
</dbReference>
<dbReference type="eggNOG" id="KOG2182">
    <property type="taxonomic scope" value="Eukaryota"/>
</dbReference>
<dbReference type="HOGENOM" id="CLU_020959_4_1_1"/>
<dbReference type="InParanoid" id="Q1PF50"/>
<dbReference type="OMA" id="CERFDVY"/>
<dbReference type="PhylomeDB" id="Q1PF50"/>
<dbReference type="PRO" id="PR:Q1PF50"/>
<dbReference type="Proteomes" id="UP000006548">
    <property type="component" value="Chromosome 2"/>
</dbReference>
<dbReference type="ExpressionAtlas" id="Q1PF50">
    <property type="expression patterns" value="baseline and differential"/>
</dbReference>
<dbReference type="GO" id="GO:0005576">
    <property type="term" value="C:extracellular region"/>
    <property type="evidence" value="ECO:0007669"/>
    <property type="project" value="UniProtKB-SubCell"/>
</dbReference>
<dbReference type="GO" id="GO:0070008">
    <property type="term" value="F:serine-type exopeptidase activity"/>
    <property type="evidence" value="ECO:0007669"/>
    <property type="project" value="InterPro"/>
</dbReference>
<dbReference type="GO" id="GO:0009561">
    <property type="term" value="P:megagametogenesis"/>
    <property type="evidence" value="ECO:0000315"/>
    <property type="project" value="TAIR"/>
</dbReference>
<dbReference type="GO" id="GO:0006508">
    <property type="term" value="P:proteolysis"/>
    <property type="evidence" value="ECO:0007669"/>
    <property type="project" value="UniProtKB-KW"/>
</dbReference>
<dbReference type="FunFam" id="1.20.120.980:FF:000005">
    <property type="entry name" value="Clan SC, family S28, unassigned serine peptidase"/>
    <property type="match status" value="1"/>
</dbReference>
<dbReference type="FunFam" id="3.40.50.1820:FF:000190">
    <property type="entry name" value="Prolyl carboxypeptidase like protein"/>
    <property type="match status" value="1"/>
</dbReference>
<dbReference type="Gene3D" id="3.40.50.1820">
    <property type="entry name" value="alpha/beta hydrolase"/>
    <property type="match status" value="1"/>
</dbReference>
<dbReference type="Gene3D" id="1.20.120.980">
    <property type="entry name" value="Serine carboxypeptidase S28, SKS domain"/>
    <property type="match status" value="1"/>
</dbReference>
<dbReference type="InterPro" id="IPR029058">
    <property type="entry name" value="AB_hydrolase_fold"/>
</dbReference>
<dbReference type="InterPro" id="IPR008758">
    <property type="entry name" value="Peptidase_S28"/>
</dbReference>
<dbReference type="InterPro" id="IPR042269">
    <property type="entry name" value="Ser_carbopepase_S28_SKS"/>
</dbReference>
<dbReference type="PANTHER" id="PTHR11010">
    <property type="entry name" value="PROTEASE S28 PRO-X CARBOXYPEPTIDASE-RELATED"/>
    <property type="match status" value="1"/>
</dbReference>
<dbReference type="PANTHER" id="PTHR11010:SF90">
    <property type="entry name" value="SERINE PROTEASE EDA2-RELATED"/>
    <property type="match status" value="1"/>
</dbReference>
<dbReference type="Pfam" id="PF05577">
    <property type="entry name" value="Peptidase_S28"/>
    <property type="match status" value="1"/>
</dbReference>
<dbReference type="SUPFAM" id="SSF53474">
    <property type="entry name" value="alpha/beta-Hydrolases"/>
    <property type="match status" value="1"/>
</dbReference>
<accession>Q1PF50</accession>
<accession>Q9SL39</accession>
<name>EDA2_ARATH</name>
<organism>
    <name type="scientific">Arabidopsis thaliana</name>
    <name type="common">Mouse-ear cress</name>
    <dbReference type="NCBI Taxonomy" id="3702"/>
    <lineage>
        <taxon>Eukaryota</taxon>
        <taxon>Viridiplantae</taxon>
        <taxon>Streptophyta</taxon>
        <taxon>Embryophyta</taxon>
        <taxon>Tracheophyta</taxon>
        <taxon>Spermatophyta</taxon>
        <taxon>Magnoliopsida</taxon>
        <taxon>eudicotyledons</taxon>
        <taxon>Gunneridae</taxon>
        <taxon>Pentapetalae</taxon>
        <taxon>rosids</taxon>
        <taxon>malvids</taxon>
        <taxon>Brassicales</taxon>
        <taxon>Brassicaceae</taxon>
        <taxon>Camelineae</taxon>
        <taxon>Arabidopsis</taxon>
    </lineage>
</organism>
<evidence type="ECO:0000255" key="1"/>
<evidence type="ECO:0000269" key="2">
    <source>
    </source>
</evidence>
<evidence type="ECO:0000269" key="3">
    <source>
    </source>
</evidence>
<evidence type="ECO:0000269" key="4">
    <source>
    </source>
</evidence>
<evidence type="ECO:0000305" key="5"/>
<feature type="signal peptide" evidence="1">
    <location>
        <begin position="1"/>
        <end position="25"/>
    </location>
</feature>
<feature type="chain" id="PRO_0000405231" description="Probable serine protease EDA2">
    <location>
        <begin position="26"/>
        <end position="489"/>
    </location>
</feature>
<feature type="active site" description="Charge relay system" evidence="1">
    <location>
        <position position="178"/>
    </location>
</feature>
<feature type="active site" description="Charge relay system" evidence="1">
    <location>
        <position position="410"/>
    </location>
</feature>
<feature type="active site" description="Charge relay system" evidence="1">
    <location>
        <position position="436"/>
    </location>
</feature>
<feature type="glycosylation site" description="N-linked (GlcNAc...) asparagine" evidence="1">
    <location>
        <position position="35"/>
    </location>
</feature>
<feature type="glycosylation site" description="N-linked (GlcNAc...) asparagine" evidence="1">
    <location>
        <position position="51"/>
    </location>
</feature>
<feature type="glycosylation site" description="N-linked (GlcNAc...) asparagine" evidence="1">
    <location>
        <position position="162"/>
    </location>
</feature>
<feature type="glycosylation site" description="N-linked (GlcNAc...) asparagine" evidence="1">
    <location>
        <position position="253"/>
    </location>
</feature>
<feature type="glycosylation site" description="N-linked (GlcNAc...) asparagine" evidence="1">
    <location>
        <position position="293"/>
    </location>
</feature>
<feature type="glycosylation site" description="N-linked (GlcNAc...) asparagine" evidence="1">
    <location>
        <position position="365"/>
    </location>
</feature>
<feature type="glycosylation site" description="N-linked (GlcNAc...) asparagine" evidence="1">
    <location>
        <position position="406"/>
    </location>
</feature>
<feature type="glycosylation site" description="N-linked (GlcNAc...) asparagine" evidence="1">
    <location>
        <position position="419"/>
    </location>
</feature>
<feature type="glycosylation site" description="N-linked (GlcNAc...) asparagine" evidence="1">
    <location>
        <position position="456"/>
    </location>
</feature>
<gene>
    <name type="primary">EDA2</name>
    <name type="ordered locus">At2g18080</name>
    <name type="ORF">T27K22.5</name>
</gene>
<keyword id="KW-0325">Glycoprotein</keyword>
<keyword id="KW-0378">Hydrolase</keyword>
<keyword id="KW-0645">Protease</keyword>
<keyword id="KW-1185">Reference proteome</keyword>
<keyword id="KW-0964">Secreted</keyword>
<keyword id="KW-0720">Serine protease</keyword>
<keyword id="KW-0732">Signal</keyword>